<protein>
    <recommendedName>
        <fullName>Sporulation protein cse60</fullName>
    </recommendedName>
</protein>
<sequence length="60" mass="6900">MLKVAVFDEEHEKDLQTEINSFLKGISEEQLIDIKYTVSAACDPDGEQLYCFSALILYRK</sequence>
<organism>
    <name type="scientific">Bacillus subtilis (strain 168)</name>
    <dbReference type="NCBI Taxonomy" id="224308"/>
    <lineage>
        <taxon>Bacteria</taxon>
        <taxon>Bacillati</taxon>
        <taxon>Bacillota</taxon>
        <taxon>Bacilli</taxon>
        <taxon>Bacillales</taxon>
        <taxon>Bacillaceae</taxon>
        <taxon>Bacillus</taxon>
    </lineage>
</organism>
<name>CSE60_BACSU</name>
<dbReference type="EMBL" id="U70041">
    <property type="protein sequence ID" value="AAB41589.1"/>
    <property type="molecule type" value="Genomic_DNA"/>
</dbReference>
<dbReference type="EMBL" id="AL009126">
    <property type="protein sequence ID" value="CAB14986.1"/>
    <property type="molecule type" value="Genomic_DNA"/>
</dbReference>
<dbReference type="PIR" id="E69991">
    <property type="entry name" value="E69991"/>
</dbReference>
<dbReference type="RefSeq" id="NP_390886.1">
    <property type="nucleotide sequence ID" value="NC_000964.3"/>
</dbReference>
<dbReference type="RefSeq" id="WP_003223398.1">
    <property type="nucleotide sequence ID" value="NZ_OZ025638.1"/>
</dbReference>
<dbReference type="FunCoup" id="P94496">
    <property type="interactions" value="48"/>
</dbReference>
<dbReference type="STRING" id="224308.BSU30080"/>
<dbReference type="PaxDb" id="224308-BSU30080"/>
<dbReference type="EnsemblBacteria" id="CAB14986">
    <property type="protein sequence ID" value="CAB14986"/>
    <property type="gene ID" value="BSU_30080"/>
</dbReference>
<dbReference type="GeneID" id="937278"/>
<dbReference type="KEGG" id="bsu:BSU30080"/>
<dbReference type="PATRIC" id="fig|224308.179.peg.3265"/>
<dbReference type="eggNOG" id="ENOG5033CVX">
    <property type="taxonomic scope" value="Bacteria"/>
</dbReference>
<dbReference type="InParanoid" id="P94496"/>
<dbReference type="OrthoDB" id="1653053at2"/>
<dbReference type="BioCyc" id="BSUB:BSU30080-MONOMER"/>
<dbReference type="PRO" id="PR:P94496"/>
<dbReference type="Proteomes" id="UP000001570">
    <property type="component" value="Chromosome"/>
</dbReference>
<dbReference type="GO" id="GO:0030435">
    <property type="term" value="P:sporulation resulting in formation of a cellular spore"/>
    <property type="evidence" value="ECO:0007669"/>
    <property type="project" value="UniProtKB-KW"/>
</dbReference>
<dbReference type="InterPro" id="IPR020296">
    <property type="entry name" value="Spore_Cse60"/>
</dbReference>
<dbReference type="Pfam" id="PF10957">
    <property type="entry name" value="Spore_Cse60"/>
    <property type="match status" value="1"/>
</dbReference>
<accession>P94496</accession>
<feature type="chain" id="PRO_0000079392" description="Sporulation protein cse60">
    <location>
        <begin position="1"/>
        <end position="60"/>
    </location>
</feature>
<keyword id="KW-1185">Reference proteome</keyword>
<keyword id="KW-0749">Sporulation</keyword>
<comment type="induction">
    <text>Transcription starts around hour 2 of sporulation and requires sigma-E.</text>
</comment>
<gene>
    <name type="primary">cse60</name>
    <name type="synonym">yteV</name>
    <name type="ordered locus">BSU30080</name>
</gene>
<reference key="1">
    <citation type="journal article" date="1997" name="J. Bacteriol.">
        <title>cse15, cse60, and csk22 are new members of mother-cell-specific sporulation regulons in Bacillus subtilis.</title>
        <authorList>
            <person name="Henriques A.O."/>
            <person name="Bryan E.M."/>
            <person name="Beall B.W."/>
            <person name="Moran C.P. Jr."/>
        </authorList>
    </citation>
    <scope>NUCLEOTIDE SEQUENCE [GENOMIC DNA]</scope>
    <scope>REGULATION</scope>
    <source>
        <strain>168</strain>
    </source>
</reference>
<reference key="2">
    <citation type="journal article" date="1997" name="Nature">
        <title>The complete genome sequence of the Gram-positive bacterium Bacillus subtilis.</title>
        <authorList>
            <person name="Kunst F."/>
            <person name="Ogasawara N."/>
            <person name="Moszer I."/>
            <person name="Albertini A.M."/>
            <person name="Alloni G."/>
            <person name="Azevedo V."/>
            <person name="Bertero M.G."/>
            <person name="Bessieres P."/>
            <person name="Bolotin A."/>
            <person name="Borchert S."/>
            <person name="Borriss R."/>
            <person name="Boursier L."/>
            <person name="Brans A."/>
            <person name="Braun M."/>
            <person name="Brignell S.C."/>
            <person name="Bron S."/>
            <person name="Brouillet S."/>
            <person name="Bruschi C.V."/>
            <person name="Caldwell B."/>
            <person name="Capuano V."/>
            <person name="Carter N.M."/>
            <person name="Choi S.-K."/>
            <person name="Codani J.-J."/>
            <person name="Connerton I.F."/>
            <person name="Cummings N.J."/>
            <person name="Daniel R.A."/>
            <person name="Denizot F."/>
            <person name="Devine K.M."/>
            <person name="Duesterhoeft A."/>
            <person name="Ehrlich S.D."/>
            <person name="Emmerson P.T."/>
            <person name="Entian K.-D."/>
            <person name="Errington J."/>
            <person name="Fabret C."/>
            <person name="Ferrari E."/>
            <person name="Foulger D."/>
            <person name="Fritz C."/>
            <person name="Fujita M."/>
            <person name="Fujita Y."/>
            <person name="Fuma S."/>
            <person name="Galizzi A."/>
            <person name="Galleron N."/>
            <person name="Ghim S.-Y."/>
            <person name="Glaser P."/>
            <person name="Goffeau A."/>
            <person name="Golightly E.J."/>
            <person name="Grandi G."/>
            <person name="Guiseppi G."/>
            <person name="Guy B.J."/>
            <person name="Haga K."/>
            <person name="Haiech J."/>
            <person name="Harwood C.R."/>
            <person name="Henaut A."/>
            <person name="Hilbert H."/>
            <person name="Holsappel S."/>
            <person name="Hosono S."/>
            <person name="Hullo M.-F."/>
            <person name="Itaya M."/>
            <person name="Jones L.-M."/>
            <person name="Joris B."/>
            <person name="Karamata D."/>
            <person name="Kasahara Y."/>
            <person name="Klaerr-Blanchard M."/>
            <person name="Klein C."/>
            <person name="Kobayashi Y."/>
            <person name="Koetter P."/>
            <person name="Koningstein G."/>
            <person name="Krogh S."/>
            <person name="Kumano M."/>
            <person name="Kurita K."/>
            <person name="Lapidus A."/>
            <person name="Lardinois S."/>
            <person name="Lauber J."/>
            <person name="Lazarevic V."/>
            <person name="Lee S.-M."/>
            <person name="Levine A."/>
            <person name="Liu H."/>
            <person name="Masuda S."/>
            <person name="Mauel C."/>
            <person name="Medigue C."/>
            <person name="Medina N."/>
            <person name="Mellado R.P."/>
            <person name="Mizuno M."/>
            <person name="Moestl D."/>
            <person name="Nakai S."/>
            <person name="Noback M."/>
            <person name="Noone D."/>
            <person name="O'Reilly M."/>
            <person name="Ogawa K."/>
            <person name="Ogiwara A."/>
            <person name="Oudega B."/>
            <person name="Park S.-H."/>
            <person name="Parro V."/>
            <person name="Pohl T.M."/>
            <person name="Portetelle D."/>
            <person name="Porwollik S."/>
            <person name="Prescott A.M."/>
            <person name="Presecan E."/>
            <person name="Pujic P."/>
            <person name="Purnelle B."/>
            <person name="Rapoport G."/>
            <person name="Rey M."/>
            <person name="Reynolds S."/>
            <person name="Rieger M."/>
            <person name="Rivolta C."/>
            <person name="Rocha E."/>
            <person name="Roche B."/>
            <person name="Rose M."/>
            <person name="Sadaie Y."/>
            <person name="Sato T."/>
            <person name="Scanlan E."/>
            <person name="Schleich S."/>
            <person name="Schroeter R."/>
            <person name="Scoffone F."/>
            <person name="Sekiguchi J."/>
            <person name="Sekowska A."/>
            <person name="Seror S.J."/>
            <person name="Serror P."/>
            <person name="Shin B.-S."/>
            <person name="Soldo B."/>
            <person name="Sorokin A."/>
            <person name="Tacconi E."/>
            <person name="Takagi T."/>
            <person name="Takahashi H."/>
            <person name="Takemaru K."/>
            <person name="Takeuchi M."/>
            <person name="Tamakoshi A."/>
            <person name="Tanaka T."/>
            <person name="Terpstra P."/>
            <person name="Tognoni A."/>
            <person name="Tosato V."/>
            <person name="Uchiyama S."/>
            <person name="Vandenbol M."/>
            <person name="Vannier F."/>
            <person name="Vassarotti A."/>
            <person name="Viari A."/>
            <person name="Wambutt R."/>
            <person name="Wedler E."/>
            <person name="Wedler H."/>
            <person name="Weitzenegger T."/>
            <person name="Winters P."/>
            <person name="Wipat A."/>
            <person name="Yamamoto H."/>
            <person name="Yamane K."/>
            <person name="Yasumoto K."/>
            <person name="Yata K."/>
            <person name="Yoshida K."/>
            <person name="Yoshikawa H.-F."/>
            <person name="Zumstein E."/>
            <person name="Yoshikawa H."/>
            <person name="Danchin A."/>
        </authorList>
    </citation>
    <scope>NUCLEOTIDE SEQUENCE [LARGE SCALE GENOMIC DNA]</scope>
    <source>
        <strain>168</strain>
    </source>
</reference>
<proteinExistence type="evidence at transcript level"/>